<feature type="chain" id="PRO_1000189105" description="Small heat shock protein IbpB">
    <location>
        <begin position="1"/>
        <end position="142"/>
    </location>
</feature>
<feature type="domain" description="sHSP" evidence="2">
    <location>
        <begin position="26"/>
        <end position="137"/>
    </location>
</feature>
<dbReference type="EMBL" id="CP000970">
    <property type="protein sequence ID" value="ACB16859.1"/>
    <property type="molecule type" value="Genomic_DNA"/>
</dbReference>
<dbReference type="RefSeq" id="WP_001243431.1">
    <property type="nucleotide sequence ID" value="NC_010498.1"/>
</dbReference>
<dbReference type="SMR" id="B1LL11"/>
<dbReference type="GeneID" id="93778427"/>
<dbReference type="KEGG" id="ecm:EcSMS35_4051"/>
<dbReference type="HOGENOM" id="CLU_046737_4_2_6"/>
<dbReference type="Proteomes" id="UP000007011">
    <property type="component" value="Chromosome"/>
</dbReference>
<dbReference type="GO" id="GO:0005737">
    <property type="term" value="C:cytoplasm"/>
    <property type="evidence" value="ECO:0007669"/>
    <property type="project" value="UniProtKB-SubCell"/>
</dbReference>
<dbReference type="GO" id="GO:0050821">
    <property type="term" value="P:protein stabilization"/>
    <property type="evidence" value="ECO:0007669"/>
    <property type="project" value="UniProtKB-UniRule"/>
</dbReference>
<dbReference type="CDD" id="cd06470">
    <property type="entry name" value="ACD_IbpA-B_like"/>
    <property type="match status" value="1"/>
</dbReference>
<dbReference type="FunFam" id="2.60.40.790:FF:000005">
    <property type="entry name" value="Small heat shock protein IbpB"/>
    <property type="match status" value="1"/>
</dbReference>
<dbReference type="Gene3D" id="2.60.40.790">
    <property type="match status" value="1"/>
</dbReference>
<dbReference type="HAMAP" id="MF_02001">
    <property type="entry name" value="HSP20_IbpB"/>
    <property type="match status" value="1"/>
</dbReference>
<dbReference type="InterPro" id="IPR002068">
    <property type="entry name" value="A-crystallin/Hsp20_dom"/>
</dbReference>
<dbReference type="InterPro" id="IPR037913">
    <property type="entry name" value="ACD_IbpA/B"/>
</dbReference>
<dbReference type="InterPro" id="IPR008978">
    <property type="entry name" value="HSP20-like_chaperone"/>
</dbReference>
<dbReference type="InterPro" id="IPR022848">
    <property type="entry name" value="HSP20_IbpB"/>
</dbReference>
<dbReference type="NCBIfam" id="NF008618">
    <property type="entry name" value="PRK11597.1"/>
    <property type="match status" value="1"/>
</dbReference>
<dbReference type="PANTHER" id="PTHR47062">
    <property type="match status" value="1"/>
</dbReference>
<dbReference type="PANTHER" id="PTHR47062:SF2">
    <property type="entry name" value="SMALL HEAT SHOCK PROTEIN IBPB"/>
    <property type="match status" value="1"/>
</dbReference>
<dbReference type="Pfam" id="PF00011">
    <property type="entry name" value="HSP20"/>
    <property type="match status" value="1"/>
</dbReference>
<dbReference type="SUPFAM" id="SSF49764">
    <property type="entry name" value="HSP20-like chaperones"/>
    <property type="match status" value="1"/>
</dbReference>
<dbReference type="PROSITE" id="PS01031">
    <property type="entry name" value="SHSP"/>
    <property type="match status" value="1"/>
</dbReference>
<accession>B1LL11</accession>
<name>IBPB_ECOSM</name>
<protein>
    <recommendedName>
        <fullName evidence="1">Small heat shock protein IbpB</fullName>
    </recommendedName>
    <alternativeName>
        <fullName evidence="1">16 kDa heat shock protein B</fullName>
    </alternativeName>
</protein>
<gene>
    <name evidence="1" type="primary">ibpB</name>
    <name type="ordered locus">EcSMS35_4051</name>
</gene>
<comment type="function">
    <text evidence="1">Associates with aggregated proteins, together with IbpA, to stabilize and protect them from irreversible denaturation and extensive proteolysis during heat shock and oxidative stress. Aggregated proteins bound to the IbpAB complex are more efficiently refolded and reactivated by the ATP-dependent chaperone systems ClpB and DnaK/DnaJ/GrpE. Its activity is ATP-independent.</text>
</comment>
<comment type="subunit">
    <text evidence="1">Homodimer. Forms homomultimers of about 100-150 subunits at optimal growth temperatures. Conformation changes to oligomers at high temperatures or high ionic concentrations. The decrease in size of the multimers is accompanied by an increase in chaperone activity.</text>
</comment>
<comment type="subcellular location">
    <subcellularLocation>
        <location evidence="1">Cytoplasm</location>
    </subcellularLocation>
</comment>
<comment type="domain">
    <text evidence="1">The N- and C-terminal flexible termini are involved in oligomerization and in the binding of non-native substrate proteins, and are essential for chaperone activity.</text>
</comment>
<comment type="similarity">
    <text evidence="1 2">Belongs to the small heat shock protein (HSP20) family.</text>
</comment>
<reference key="1">
    <citation type="journal article" date="2008" name="J. Bacteriol.">
        <title>Insights into the environmental resistance gene pool from the genome sequence of the multidrug-resistant environmental isolate Escherichia coli SMS-3-5.</title>
        <authorList>
            <person name="Fricke W.F."/>
            <person name="Wright M.S."/>
            <person name="Lindell A.H."/>
            <person name="Harkins D.M."/>
            <person name="Baker-Austin C."/>
            <person name="Ravel J."/>
            <person name="Stepanauskas R."/>
        </authorList>
    </citation>
    <scope>NUCLEOTIDE SEQUENCE [LARGE SCALE GENOMIC DNA]</scope>
    <source>
        <strain>SMS-3-5 / SECEC</strain>
    </source>
</reference>
<proteinExistence type="inferred from homology"/>
<evidence type="ECO:0000255" key="1">
    <source>
        <dbReference type="HAMAP-Rule" id="MF_02001"/>
    </source>
</evidence>
<evidence type="ECO:0000255" key="2">
    <source>
        <dbReference type="PROSITE-ProRule" id="PRU00285"/>
    </source>
</evidence>
<sequence>MRNFDLSPLMRQWIGFDKLANALQNAGESQSFPPYNIEKSDDNHYRITLALAGFRQEDLEIQLEGTRLSVKGTPEQPKEEKKWLHQGLMNQPFSLSFTLAENMEVSGATFVNGLLHIDLIRNEPEPIAAQRIAISERPALNS</sequence>
<organism>
    <name type="scientific">Escherichia coli (strain SMS-3-5 / SECEC)</name>
    <dbReference type="NCBI Taxonomy" id="439855"/>
    <lineage>
        <taxon>Bacteria</taxon>
        <taxon>Pseudomonadati</taxon>
        <taxon>Pseudomonadota</taxon>
        <taxon>Gammaproteobacteria</taxon>
        <taxon>Enterobacterales</taxon>
        <taxon>Enterobacteriaceae</taxon>
        <taxon>Escherichia</taxon>
    </lineage>
</organism>
<keyword id="KW-0143">Chaperone</keyword>
<keyword id="KW-0963">Cytoplasm</keyword>
<keyword id="KW-0346">Stress response</keyword>